<comment type="function">
    <text evidence="2 3 6 7 8 9 10">Catalytic subunit of the DNA primase complex and component of the DNA polymerase alpha complex (also known as the alpha DNA polymerase-primase complex) which play an essential role in the initiation of DNA synthesis (PubMed:6403945, PubMed:6409898, PubMed:6773966, PubMed:6806812, PubMed:6812052). During the S phase of the cell cycle, the DNA polymerase alpha complex (composed of a catalytic subunit PolA1, an accessory subunit PolA2 and two primase subunits, the catalytic subunit Prim1 and the regulatory subunit Prim2) is recruited to DNA at the replicative forks (By similarity). The primase subunit of the polymerase alpha complex initiates DNA synthesis by oligomerising short RNA primers on both leading and lagging strands (By similarity). These primers are initially extended by the polymerase alpha catalytic subunit and subsequently transferred to polymerase delta and polymerase epsilon for processive synthesis on the lagging and leading strand, respectively (By similarity). In the primase complex, both subunits are necessary for the initial di-nucleotide formation, but the extension of the primer depends only on the catalytic subunit (By similarity). Can add both ribo- and deoxynucleotides during elongation of the primers (PubMed:6812052). Binds single stranded DNA (By similarity).</text>
</comment>
<comment type="cofactor">
    <cofactor evidence="4">
        <name>Mg(2+)</name>
        <dbReference type="ChEBI" id="CHEBI:18420"/>
    </cofactor>
    <cofactor evidence="4">
        <name>Mn(2+)</name>
        <dbReference type="ChEBI" id="CHEBI:29035"/>
    </cofactor>
</comment>
<comment type="activity regulation">
    <text evidence="3">The presence of the regulatory subunit Prim2 accelerates the kinetics of initiation and primer extension.</text>
</comment>
<comment type="subunit">
    <text evidence="6 7 8">Heterodimer of a catalytic subunit Prim1 and a regulatory subunit Prim2, also known as the DNA primase complex (PubMed:6403945, PubMed:6409898). Component of the alpha DNA polymerase complex (also known as the alpha DNA polymerase-primase complex) consisting of four subunits: the catalytic subunit PolA1, the regulatory subunit PolA2, and the primase complex subunits Prim1 and Prim2 respectively (PubMed:6403945, PubMed:6409898, PubMed:6773966). PolA1 associates with the DNA primase complex before association with PolA2 (PubMed:6409898).</text>
</comment>
<comment type="tissue specificity">
    <text evidence="6 7 8">Expressed in embryos (at protein level).</text>
</comment>
<comment type="developmental stage">
    <text evidence="11">Expressed both maternally and zygotically. Expression is very low in late embryos, larvae, pupae and adult males.</text>
</comment>
<comment type="miscellaneous">
    <text evidence="1">The bound zinc ion is not a cofactor. It is bound to a zinc knuckle motif that may be involved in sequence recognition and the binding of ssDNA (By similarity).</text>
</comment>
<comment type="similarity">
    <text evidence="15">Belongs to the eukaryotic-type primase small subunit family.</text>
</comment>
<feature type="chain" id="PRO_0000046733" description="DNA primase small subunit">
    <location>
        <begin position="1"/>
        <end position="438"/>
    </location>
</feature>
<feature type="short sequence motif" description="Zinc knuckle motif">
    <location>
        <begin position="139"/>
        <end position="149"/>
    </location>
</feature>
<feature type="active site" evidence="5">
    <location>
        <position position="63"/>
    </location>
</feature>
<feature type="active site" evidence="5">
    <location>
        <position position="127"/>
    </location>
</feature>
<feature type="active site" evidence="5">
    <location>
        <position position="129"/>
    </location>
</feature>
<feature type="sequence conflict" description="In Ref. 1; CAA56196." evidence="15" ref="1">
    <original>R</original>
    <variation>A</variation>
    <location>
        <position position="165"/>
    </location>
</feature>
<feature type="sequence conflict" description="In Ref. 1; CAA56196." evidence="15" ref="1">
    <original>V</original>
    <variation>E</variation>
    <location>
        <position position="203"/>
    </location>
</feature>
<feature type="sequence conflict" description="In Ref. 1; CAA56196." evidence="15" ref="1">
    <original>L</original>
    <variation>I</variation>
    <location>
        <position position="233"/>
    </location>
</feature>
<feature type="sequence conflict" description="In Ref. 1; CAA56196." evidence="15" ref="1">
    <original>Q</original>
    <variation>E</variation>
    <location>
        <position position="431"/>
    </location>
</feature>
<keyword id="KW-0235">DNA replication</keyword>
<keyword id="KW-0240">DNA-directed RNA polymerase</keyword>
<keyword id="KW-0479">Metal-binding</keyword>
<keyword id="KW-0548">Nucleotidyltransferase</keyword>
<keyword id="KW-0639">Primosome</keyword>
<keyword id="KW-1185">Reference proteome</keyword>
<keyword id="KW-0804">Transcription</keyword>
<keyword id="KW-0808">Transferase</keyword>
<keyword id="KW-0862">Zinc</keyword>
<dbReference type="EC" id="2.7.7.-" evidence="7 9 10"/>
<dbReference type="EMBL" id="X79801">
    <property type="protein sequence ID" value="CAA56196.1"/>
    <property type="molecule type" value="mRNA"/>
</dbReference>
<dbReference type="EMBL" id="AE014296">
    <property type="protein sequence ID" value="AAF50439.1"/>
    <property type="molecule type" value="Genomic_DNA"/>
</dbReference>
<dbReference type="EMBL" id="AY071217">
    <property type="protein sequence ID" value="AAL48839.1"/>
    <property type="molecule type" value="mRNA"/>
</dbReference>
<dbReference type="PIR" id="A55070">
    <property type="entry name" value="A55070"/>
</dbReference>
<dbReference type="RefSeq" id="NP_523972.2">
    <property type="nucleotide sequence ID" value="NM_079248.4"/>
</dbReference>
<dbReference type="SMR" id="Q24317"/>
<dbReference type="BioGRID" id="64360">
    <property type="interactions" value="8"/>
</dbReference>
<dbReference type="ComplexPortal" id="CPX-2090">
    <property type="entry name" value="DNA polymerase alpha:primase complex"/>
</dbReference>
<dbReference type="DIP" id="DIP-20251N"/>
<dbReference type="FunCoup" id="Q24317">
    <property type="interactions" value="174"/>
</dbReference>
<dbReference type="IntAct" id="Q24317">
    <property type="interactions" value="4"/>
</dbReference>
<dbReference type="STRING" id="7227.FBpp0076330"/>
<dbReference type="PaxDb" id="7227-FBpp0076330"/>
<dbReference type="DNASU" id="38942"/>
<dbReference type="EnsemblMetazoa" id="FBtr0076603">
    <property type="protein sequence ID" value="FBpp0076330"/>
    <property type="gene ID" value="FBgn0011762"/>
</dbReference>
<dbReference type="GeneID" id="38942"/>
<dbReference type="KEGG" id="dme:Dmel_CG7108"/>
<dbReference type="AGR" id="FB:FBgn0011762"/>
<dbReference type="CTD" id="5557"/>
<dbReference type="FlyBase" id="FBgn0011762">
    <property type="gene designation" value="Prim1"/>
</dbReference>
<dbReference type="VEuPathDB" id="VectorBase:FBgn0011762"/>
<dbReference type="eggNOG" id="KOG2851">
    <property type="taxonomic scope" value="Eukaryota"/>
</dbReference>
<dbReference type="GeneTree" id="ENSGT00390000011466"/>
<dbReference type="HOGENOM" id="CLU_028288_3_2_1"/>
<dbReference type="InParanoid" id="Q24317"/>
<dbReference type="OMA" id="NVTRGFN"/>
<dbReference type="OrthoDB" id="19606at2759"/>
<dbReference type="PhylomeDB" id="Q24317"/>
<dbReference type="Reactome" id="R-DME-113501">
    <property type="pathway name" value="Inhibition of replication initiation of damaged DNA by RB1/E2F1"/>
</dbReference>
<dbReference type="Reactome" id="R-DME-68952">
    <property type="pathway name" value="DNA replication initiation"/>
</dbReference>
<dbReference type="Reactome" id="R-DME-68962">
    <property type="pathway name" value="Activation of the pre-replicative complex"/>
</dbReference>
<dbReference type="Reactome" id="R-DME-69091">
    <property type="pathway name" value="Polymerase switching"/>
</dbReference>
<dbReference type="Reactome" id="R-DME-69166">
    <property type="pathway name" value="Removal of the Flap Intermediate"/>
</dbReference>
<dbReference type="Reactome" id="R-DME-69183">
    <property type="pathway name" value="Processive synthesis on the lagging strand"/>
</dbReference>
<dbReference type="BioGRID-ORCS" id="38942">
    <property type="hits" value="0 hits in 1 CRISPR screen"/>
</dbReference>
<dbReference type="ChiTaRS" id="DNApol-alpha50">
    <property type="organism name" value="fly"/>
</dbReference>
<dbReference type="GenomeRNAi" id="38942"/>
<dbReference type="PRO" id="PR:Q24317"/>
<dbReference type="Proteomes" id="UP000000803">
    <property type="component" value="Chromosome 3L"/>
</dbReference>
<dbReference type="Bgee" id="FBgn0011762">
    <property type="expression patterns" value="Expressed in secondary oocyte and 29 other cell types or tissues"/>
</dbReference>
<dbReference type="GO" id="GO:0005658">
    <property type="term" value="C:alpha DNA polymerase:primase complex"/>
    <property type="evidence" value="ECO:0000314"/>
    <property type="project" value="FlyBase"/>
</dbReference>
<dbReference type="GO" id="GO:0003899">
    <property type="term" value="F:DNA-directed RNA polymerase activity"/>
    <property type="evidence" value="ECO:0000314"/>
    <property type="project" value="FlyBase"/>
</dbReference>
<dbReference type="GO" id="GO:0046872">
    <property type="term" value="F:metal ion binding"/>
    <property type="evidence" value="ECO:0007669"/>
    <property type="project" value="UniProtKB-KW"/>
</dbReference>
<dbReference type="GO" id="GO:0006270">
    <property type="term" value="P:DNA replication initiation"/>
    <property type="evidence" value="ECO:0000314"/>
    <property type="project" value="ComplexPortal"/>
</dbReference>
<dbReference type="GO" id="GO:0006269">
    <property type="term" value="P:DNA replication, synthesis of primer"/>
    <property type="evidence" value="ECO:0000314"/>
    <property type="project" value="FlyBase"/>
</dbReference>
<dbReference type="GO" id="GO:0006261">
    <property type="term" value="P:DNA-templated DNA replication"/>
    <property type="evidence" value="ECO:0000314"/>
    <property type="project" value="FlyBase"/>
</dbReference>
<dbReference type="CDD" id="cd04860">
    <property type="entry name" value="AE_Prim_S"/>
    <property type="match status" value="1"/>
</dbReference>
<dbReference type="FunFam" id="3.90.920.10:FF:000001">
    <property type="entry name" value="DNA primase"/>
    <property type="match status" value="1"/>
</dbReference>
<dbReference type="Gene3D" id="3.90.920.10">
    <property type="entry name" value="DNA primase, PRIM domain"/>
    <property type="match status" value="1"/>
</dbReference>
<dbReference type="InterPro" id="IPR002755">
    <property type="entry name" value="DNA_primase_S"/>
</dbReference>
<dbReference type="InterPro" id="IPR014052">
    <property type="entry name" value="DNA_primase_ssu_euk/arc"/>
</dbReference>
<dbReference type="NCBIfam" id="TIGR00335">
    <property type="entry name" value="primase_sml"/>
    <property type="match status" value="1"/>
</dbReference>
<dbReference type="PANTHER" id="PTHR10536">
    <property type="entry name" value="DNA PRIMASE SMALL SUBUNIT"/>
    <property type="match status" value="1"/>
</dbReference>
<dbReference type="Pfam" id="PF01896">
    <property type="entry name" value="DNA_primase_S"/>
    <property type="match status" value="1"/>
</dbReference>
<dbReference type="SUPFAM" id="SSF56747">
    <property type="entry name" value="Prim-pol domain"/>
    <property type="match status" value="1"/>
</dbReference>
<evidence type="ECO:0000250" key="1"/>
<evidence type="ECO:0000250" key="2">
    <source>
        <dbReference type="UniProtKB" id="P09884"/>
    </source>
</evidence>
<evidence type="ECO:0000250" key="3">
    <source>
        <dbReference type="UniProtKB" id="P20664"/>
    </source>
</evidence>
<evidence type="ECO:0000250" key="4">
    <source>
        <dbReference type="UniProtKB" id="P49642"/>
    </source>
</evidence>
<evidence type="ECO:0000255" key="5"/>
<evidence type="ECO:0000269" key="6">
    <source>
    </source>
</evidence>
<evidence type="ECO:0000269" key="7">
    <source>
    </source>
</evidence>
<evidence type="ECO:0000269" key="8">
    <source>
    </source>
</evidence>
<evidence type="ECO:0000269" key="9">
    <source>
    </source>
</evidence>
<evidence type="ECO:0000269" key="10">
    <source>
    </source>
</evidence>
<evidence type="ECO:0000269" key="11">
    <source>
    </source>
</evidence>
<evidence type="ECO:0000303" key="12">
    <source>
    </source>
</evidence>
<evidence type="ECO:0000303" key="13">
    <source>
    </source>
</evidence>
<evidence type="ECO:0000303" key="14">
    <source>
    </source>
</evidence>
<evidence type="ECO:0000305" key="15"/>
<evidence type="ECO:0000312" key="16">
    <source>
        <dbReference type="FlyBase" id="FBgn0011762"/>
    </source>
</evidence>
<accession>Q24317</accession>
<accession>Q9VSI0</accession>
<gene>
    <name evidence="16" type="primary">Prim1</name>
    <name evidence="14 16" type="synonym">DNApol-alpha50</name>
    <name evidence="16" type="synonym">Pri50</name>
    <name evidence="16" type="ORF">CG7108</name>
</gene>
<proteinExistence type="evidence at protein level"/>
<name>PRI1_DROME</name>
<reference key="1">
    <citation type="journal article" date="1994" name="J. Biol. Chem.">
        <title>The 50-kDa primase subunit of Drosophila melanogaster DNA polymerase alpha. Molecular characterization of the gene and functional analysis of the overexpressed protein.</title>
        <authorList>
            <person name="Bakkenist C.J."/>
            <person name="Cotterill S."/>
        </authorList>
    </citation>
    <scope>NUCLEOTIDE SEQUENCE [MRNA]</scope>
    <scope>FUNCTION</scope>
    <scope>DEVELOPMENTAL STAGE</scope>
    <source>
        <tissue>Embryo</tissue>
    </source>
</reference>
<reference key="2">
    <citation type="journal article" date="2000" name="Science">
        <title>The genome sequence of Drosophila melanogaster.</title>
        <authorList>
            <person name="Adams M.D."/>
            <person name="Celniker S.E."/>
            <person name="Holt R.A."/>
            <person name="Evans C.A."/>
            <person name="Gocayne J.D."/>
            <person name="Amanatides P.G."/>
            <person name="Scherer S.E."/>
            <person name="Li P.W."/>
            <person name="Hoskins R.A."/>
            <person name="Galle R.F."/>
            <person name="George R.A."/>
            <person name="Lewis S.E."/>
            <person name="Richards S."/>
            <person name="Ashburner M."/>
            <person name="Henderson S.N."/>
            <person name="Sutton G.G."/>
            <person name="Wortman J.R."/>
            <person name="Yandell M.D."/>
            <person name="Zhang Q."/>
            <person name="Chen L.X."/>
            <person name="Brandon R.C."/>
            <person name="Rogers Y.-H.C."/>
            <person name="Blazej R.G."/>
            <person name="Champe M."/>
            <person name="Pfeiffer B.D."/>
            <person name="Wan K.H."/>
            <person name="Doyle C."/>
            <person name="Baxter E.G."/>
            <person name="Helt G."/>
            <person name="Nelson C.R."/>
            <person name="Miklos G.L.G."/>
            <person name="Abril J.F."/>
            <person name="Agbayani A."/>
            <person name="An H.-J."/>
            <person name="Andrews-Pfannkoch C."/>
            <person name="Baldwin D."/>
            <person name="Ballew R.M."/>
            <person name="Basu A."/>
            <person name="Baxendale J."/>
            <person name="Bayraktaroglu L."/>
            <person name="Beasley E.M."/>
            <person name="Beeson K.Y."/>
            <person name="Benos P.V."/>
            <person name="Berman B.P."/>
            <person name="Bhandari D."/>
            <person name="Bolshakov S."/>
            <person name="Borkova D."/>
            <person name="Botchan M.R."/>
            <person name="Bouck J."/>
            <person name="Brokstein P."/>
            <person name="Brottier P."/>
            <person name="Burtis K.C."/>
            <person name="Busam D.A."/>
            <person name="Butler H."/>
            <person name="Cadieu E."/>
            <person name="Center A."/>
            <person name="Chandra I."/>
            <person name="Cherry J.M."/>
            <person name="Cawley S."/>
            <person name="Dahlke C."/>
            <person name="Davenport L.B."/>
            <person name="Davies P."/>
            <person name="de Pablos B."/>
            <person name="Delcher A."/>
            <person name="Deng Z."/>
            <person name="Mays A.D."/>
            <person name="Dew I."/>
            <person name="Dietz S.M."/>
            <person name="Dodson K."/>
            <person name="Doup L.E."/>
            <person name="Downes M."/>
            <person name="Dugan-Rocha S."/>
            <person name="Dunkov B.C."/>
            <person name="Dunn P."/>
            <person name="Durbin K.J."/>
            <person name="Evangelista C.C."/>
            <person name="Ferraz C."/>
            <person name="Ferriera S."/>
            <person name="Fleischmann W."/>
            <person name="Fosler C."/>
            <person name="Gabrielian A.E."/>
            <person name="Garg N.S."/>
            <person name="Gelbart W.M."/>
            <person name="Glasser K."/>
            <person name="Glodek A."/>
            <person name="Gong F."/>
            <person name="Gorrell J.H."/>
            <person name="Gu Z."/>
            <person name="Guan P."/>
            <person name="Harris M."/>
            <person name="Harris N.L."/>
            <person name="Harvey D.A."/>
            <person name="Heiman T.J."/>
            <person name="Hernandez J.R."/>
            <person name="Houck J."/>
            <person name="Hostin D."/>
            <person name="Houston K.A."/>
            <person name="Howland T.J."/>
            <person name="Wei M.-H."/>
            <person name="Ibegwam C."/>
            <person name="Jalali M."/>
            <person name="Kalush F."/>
            <person name="Karpen G.H."/>
            <person name="Ke Z."/>
            <person name="Kennison J.A."/>
            <person name="Ketchum K.A."/>
            <person name="Kimmel B.E."/>
            <person name="Kodira C.D."/>
            <person name="Kraft C.L."/>
            <person name="Kravitz S."/>
            <person name="Kulp D."/>
            <person name="Lai Z."/>
            <person name="Lasko P."/>
            <person name="Lei Y."/>
            <person name="Levitsky A.A."/>
            <person name="Li J.H."/>
            <person name="Li Z."/>
            <person name="Liang Y."/>
            <person name="Lin X."/>
            <person name="Liu X."/>
            <person name="Mattei B."/>
            <person name="McIntosh T.C."/>
            <person name="McLeod M.P."/>
            <person name="McPherson D."/>
            <person name="Merkulov G."/>
            <person name="Milshina N.V."/>
            <person name="Mobarry C."/>
            <person name="Morris J."/>
            <person name="Moshrefi A."/>
            <person name="Mount S.M."/>
            <person name="Moy M."/>
            <person name="Murphy B."/>
            <person name="Murphy L."/>
            <person name="Muzny D.M."/>
            <person name="Nelson D.L."/>
            <person name="Nelson D.R."/>
            <person name="Nelson K.A."/>
            <person name="Nixon K."/>
            <person name="Nusskern D.R."/>
            <person name="Pacleb J.M."/>
            <person name="Palazzolo M."/>
            <person name="Pittman G.S."/>
            <person name="Pan S."/>
            <person name="Pollard J."/>
            <person name="Puri V."/>
            <person name="Reese M.G."/>
            <person name="Reinert K."/>
            <person name="Remington K."/>
            <person name="Saunders R.D.C."/>
            <person name="Scheeler F."/>
            <person name="Shen H."/>
            <person name="Shue B.C."/>
            <person name="Siden-Kiamos I."/>
            <person name="Simpson M."/>
            <person name="Skupski M.P."/>
            <person name="Smith T.J."/>
            <person name="Spier E."/>
            <person name="Spradling A.C."/>
            <person name="Stapleton M."/>
            <person name="Strong R."/>
            <person name="Sun E."/>
            <person name="Svirskas R."/>
            <person name="Tector C."/>
            <person name="Turner R."/>
            <person name="Venter E."/>
            <person name="Wang A.H."/>
            <person name="Wang X."/>
            <person name="Wang Z.-Y."/>
            <person name="Wassarman D.A."/>
            <person name="Weinstock G.M."/>
            <person name="Weissenbach J."/>
            <person name="Williams S.M."/>
            <person name="Woodage T."/>
            <person name="Worley K.C."/>
            <person name="Wu D."/>
            <person name="Yang S."/>
            <person name="Yao Q.A."/>
            <person name="Ye J."/>
            <person name="Yeh R.-F."/>
            <person name="Zaveri J.S."/>
            <person name="Zhan M."/>
            <person name="Zhang G."/>
            <person name="Zhao Q."/>
            <person name="Zheng L."/>
            <person name="Zheng X.H."/>
            <person name="Zhong F.N."/>
            <person name="Zhong W."/>
            <person name="Zhou X."/>
            <person name="Zhu S.C."/>
            <person name="Zhu X."/>
            <person name="Smith H.O."/>
            <person name="Gibbs R.A."/>
            <person name="Myers E.W."/>
            <person name="Rubin G.M."/>
            <person name="Venter J.C."/>
        </authorList>
    </citation>
    <scope>NUCLEOTIDE SEQUENCE [LARGE SCALE GENOMIC DNA]</scope>
    <source>
        <strain>Berkeley</strain>
    </source>
</reference>
<reference key="3">
    <citation type="journal article" date="2002" name="Genome Biol.">
        <title>Annotation of the Drosophila melanogaster euchromatic genome: a systematic review.</title>
        <authorList>
            <person name="Misra S."/>
            <person name="Crosby M.A."/>
            <person name="Mungall C.J."/>
            <person name="Matthews B.B."/>
            <person name="Campbell K.S."/>
            <person name="Hradecky P."/>
            <person name="Huang Y."/>
            <person name="Kaminker J.S."/>
            <person name="Millburn G.H."/>
            <person name="Prochnik S.E."/>
            <person name="Smith C.D."/>
            <person name="Tupy J.L."/>
            <person name="Whitfield E.J."/>
            <person name="Bayraktaroglu L."/>
            <person name="Berman B.P."/>
            <person name="Bettencourt B.R."/>
            <person name="Celniker S.E."/>
            <person name="de Grey A.D.N.J."/>
            <person name="Drysdale R.A."/>
            <person name="Harris N.L."/>
            <person name="Richter J."/>
            <person name="Russo S."/>
            <person name="Schroeder A.J."/>
            <person name="Shu S.Q."/>
            <person name="Stapleton M."/>
            <person name="Yamada C."/>
            <person name="Ashburner M."/>
            <person name="Gelbart W.M."/>
            <person name="Rubin G.M."/>
            <person name="Lewis S.E."/>
        </authorList>
    </citation>
    <scope>GENOME REANNOTATION</scope>
    <source>
        <strain>Berkeley</strain>
    </source>
</reference>
<reference key="4">
    <citation type="journal article" date="2002" name="Genome Biol.">
        <title>A Drosophila full-length cDNA resource.</title>
        <authorList>
            <person name="Stapleton M."/>
            <person name="Carlson J.W."/>
            <person name="Brokstein P."/>
            <person name="Yu C."/>
            <person name="Champe M."/>
            <person name="George R.A."/>
            <person name="Guarin H."/>
            <person name="Kronmiller B."/>
            <person name="Pacleb J.M."/>
            <person name="Park S."/>
            <person name="Wan K.H."/>
            <person name="Rubin G.M."/>
            <person name="Celniker S.E."/>
        </authorList>
    </citation>
    <scope>NUCLEOTIDE SEQUENCE [LARGE SCALE MRNA]</scope>
    <source>
        <strain>Berkeley</strain>
        <tissue>Embryo</tissue>
    </source>
</reference>
<reference key="5">
    <citation type="journal article" date="1980" name="J. Biol. Chem.">
        <title>DNA polymerase alpha from Drosophila melanogaster embryos. Subunit structure.</title>
        <authorList>
            <person name="Villani G."/>
            <person name="Sauer B."/>
            <person name="Lehman I.R."/>
        </authorList>
    </citation>
    <scope>FUNCTION</scope>
    <scope>IDENTIFICATION IN THE DNA POLYMERASE ALPHA COMPLEX</scope>
    <scope>TISSUE SPECIFICITY</scope>
</reference>
<reference key="6">
    <citation type="journal article" date="1982" name="Proc. Natl. Acad. Sci. U.S.A.">
        <title>A DNA primase activity associated with DNA polymerase alpha from Drosophila melanogaster embryos.</title>
        <authorList>
            <person name="Conaway R.C."/>
            <person name="Lehman I.R."/>
        </authorList>
    </citation>
    <scope>FUNCTION</scope>
    <scope>CATALYTIC ACTIVITY</scope>
</reference>
<reference key="7">
    <citation type="journal article" date="1982" name="Proc. Natl. Acad. Sci. U.S.A.">
        <title>Synthesis by the DNA primase of Drosophila melanogaster of a primer with a unique chain length.</title>
        <authorList>
            <person name="Conaway R.C."/>
            <person name="Lehman I.R."/>
        </authorList>
    </citation>
    <scope>FUNCTION</scope>
    <scope>CATALYTIC ACTIVITY</scope>
</reference>
<reference key="8">
    <citation type="journal article" date="1983" name="J. Biol. Chem.">
        <title>Association of DNA primase with the beta/gamma subunits of DNA polymerase alpha from Drosophila melanogaster embryos.</title>
        <authorList>
            <person name="Kaguni L.S."/>
            <person name="Rossignol J.M."/>
            <person name="Conaway R.C."/>
            <person name="Banks G.R."/>
            <person name="Lehman I.R."/>
        </authorList>
    </citation>
    <scope>FUNCTION</scope>
    <scope>CATALYTIC ACTIVITY</scope>
    <scope>IDENTIFICATION IN THE DNA POLYMERASE ALPHA COMPLEX</scope>
    <scope>IDENTIFICATION IN DNA PRIMASE COMPLEX</scope>
    <scope>TISSUE SPECIFICITY</scope>
</reference>
<reference key="9">
    <citation type="journal article" date="1983" name="Proc. Natl. Acad. Sci. U.S.A.">
        <title>Isolation of an intact DNA polymerase-primase from embryos of Drosophila melanogaster.</title>
        <authorList>
            <person name="Kaguni L.S."/>
            <person name="Rossignol J.M."/>
            <person name="Conaway R.C."/>
            <person name="Lehman I.R."/>
        </authorList>
    </citation>
    <scope>FUNCTION</scope>
    <scope>IDENTIFICATION IN THE DNA POLYMERASE ALPHA COMPLEX</scope>
    <scope>IDENTIFICATION IN DNA PRIMASE COMPLEX</scope>
    <scope>TISSUE SPECIFICITY</scope>
</reference>
<protein>
    <recommendedName>
        <fullName evidence="15">DNA primase small subunit</fullName>
        <ecNumber evidence="7 9 10">2.7.7.-</ecNumber>
    </recommendedName>
    <alternativeName>
        <fullName evidence="13">DNA polymerase subunit A</fullName>
    </alternativeName>
    <alternativeName>
        <fullName evidence="12">DNA polymerase subunit gamma</fullName>
    </alternativeName>
    <alternativeName>
        <fullName evidence="14">DNA primase 50 kDa subunit</fullName>
        <shortName>dPRI50</shortName>
    </alternativeName>
</protein>
<organism>
    <name type="scientific">Drosophila melanogaster</name>
    <name type="common">Fruit fly</name>
    <dbReference type="NCBI Taxonomy" id="7227"/>
    <lineage>
        <taxon>Eukaryota</taxon>
        <taxon>Metazoa</taxon>
        <taxon>Ecdysozoa</taxon>
        <taxon>Arthropoda</taxon>
        <taxon>Hexapoda</taxon>
        <taxon>Insecta</taxon>
        <taxon>Pterygota</taxon>
        <taxon>Neoptera</taxon>
        <taxon>Endopterygota</taxon>
        <taxon>Diptera</taxon>
        <taxon>Brachycera</taxon>
        <taxon>Muscomorpha</taxon>
        <taxon>Ephydroidea</taxon>
        <taxon>Drosophilidae</taxon>
        <taxon>Drosophila</taxon>
        <taxon>Sophophora</taxon>
    </lineage>
</organism>
<sequence length="438" mass="50222">MPEQVTDQENQAPQQQTTAVHAYNPEVLQDMLPVYYRRLFPHLPFYRWLSYGSSEDAIFSNREISFTLQDDIYIRYLCFDTQAELEKEICSRNPIKIDIGPVMHSKPKNHRSIPGGLTPVQRELVFDIDMTDYDEVRTCCSGAGVCLKCWKFMVLAARVLDVALREDFGFEHIIWIFSGRRGIHCWVCDYQARHLDGRGRYAVAEYLNIITYASFAGGNSPRCSMGDRPHHSLKRALKIVEPMFEEIVLEDQNLFGTPKGVTKLLNMVHDDAARGELESYMQKNLEDGAHSRLVWESFIKYANSMRTSTTSAWSRKLKNIVAEIQLGLLYPRLDINVTRGFNHLLKAPFCIHPATGKVCVPFSVSAVAKFDPTTVPTITQLLHEINAFDDKSKSYMEAPEDKSRIKDHKKTSMFKGVVVFEEFLRKLERSQKSASLQF</sequence>